<keyword id="KW-0067">ATP-binding</keyword>
<keyword id="KW-0520">NAD</keyword>
<keyword id="KW-0547">Nucleotide-binding</keyword>
<keyword id="KW-0548">Nucleotidyltransferase</keyword>
<keyword id="KW-0662">Pyridine nucleotide biosynthesis</keyword>
<keyword id="KW-1185">Reference proteome</keyword>
<keyword id="KW-0808">Transferase</keyword>
<comment type="function">
    <text evidence="1">Catalyzes the reversible adenylation of nicotinate mononucleotide (NaMN) to nicotinic acid adenine dinucleotide (NaAD).</text>
</comment>
<comment type="catalytic activity">
    <reaction evidence="1">
        <text>nicotinate beta-D-ribonucleotide + ATP + H(+) = deamido-NAD(+) + diphosphate</text>
        <dbReference type="Rhea" id="RHEA:22860"/>
        <dbReference type="ChEBI" id="CHEBI:15378"/>
        <dbReference type="ChEBI" id="CHEBI:30616"/>
        <dbReference type="ChEBI" id="CHEBI:33019"/>
        <dbReference type="ChEBI" id="CHEBI:57502"/>
        <dbReference type="ChEBI" id="CHEBI:58437"/>
        <dbReference type="EC" id="2.7.7.18"/>
    </reaction>
</comment>
<comment type="pathway">
    <text evidence="1">Cofactor biosynthesis; NAD(+) biosynthesis; deamido-NAD(+) from nicotinate D-ribonucleotide: step 1/1.</text>
</comment>
<comment type="similarity">
    <text evidence="1">Belongs to the NadD family.</text>
</comment>
<protein>
    <recommendedName>
        <fullName evidence="1">Probable nicotinate-nucleotide adenylyltransferase</fullName>
        <ecNumber evidence="1">2.7.7.18</ecNumber>
    </recommendedName>
    <alternativeName>
        <fullName evidence="1">Deamido-NAD(+) diphosphorylase</fullName>
    </alternativeName>
    <alternativeName>
        <fullName evidence="1">Deamido-NAD(+) pyrophosphorylase</fullName>
    </alternativeName>
    <alternativeName>
        <fullName evidence="1">Nicotinate mononucleotide adenylyltransferase</fullName>
        <shortName evidence="1">NaMN adenylyltransferase</shortName>
    </alternativeName>
</protein>
<evidence type="ECO:0000255" key="1">
    <source>
        <dbReference type="HAMAP-Rule" id="MF_00244"/>
    </source>
</evidence>
<organism>
    <name type="scientific">Chromobacterium violaceum (strain ATCC 12472 / DSM 30191 / JCM 1249 / CCUG 213 / NBRC 12614 / NCIMB 9131 / NCTC 9757 / MK)</name>
    <dbReference type="NCBI Taxonomy" id="243365"/>
    <lineage>
        <taxon>Bacteria</taxon>
        <taxon>Pseudomonadati</taxon>
        <taxon>Pseudomonadota</taxon>
        <taxon>Betaproteobacteria</taxon>
        <taxon>Neisseriales</taxon>
        <taxon>Chromobacteriaceae</taxon>
        <taxon>Chromobacterium</taxon>
    </lineage>
</organism>
<sequence>MNARVGVFGGTFDPVHHAHLRMARAFADELALDEVRLIPAGQPYHRLEGPHASAAQRLDMVKLAIAADARLAVDEREIRRARPAYTVDTLRELRAELGDAAELWFLIGGDSLAALSSWKDWRKLFRLANLAVAMRPGFDPAALPPEVFQEWQARQVSDFSNRTASGTIRPLALPPLDLSATRLRARLAADEPVDGLIDPAVLAYIRRQRLYR</sequence>
<name>NADD_CHRVO</name>
<reference key="1">
    <citation type="journal article" date="2003" name="Proc. Natl. Acad. Sci. U.S.A.">
        <title>The complete genome sequence of Chromobacterium violaceum reveals remarkable and exploitable bacterial adaptability.</title>
        <authorList>
            <person name="Vasconcelos A.T.R."/>
            <person name="de Almeida D.F."/>
            <person name="Hungria M."/>
            <person name="Guimaraes C.T."/>
            <person name="Antonio R.V."/>
            <person name="Almeida F.C."/>
            <person name="de Almeida L.G.P."/>
            <person name="de Almeida R."/>
            <person name="Alves-Gomes J.A."/>
            <person name="Andrade E.M."/>
            <person name="Araripe J."/>
            <person name="de Araujo M.F.F."/>
            <person name="Astolfi-Filho S."/>
            <person name="Azevedo V."/>
            <person name="Baptista A.J."/>
            <person name="Bataus L.A.M."/>
            <person name="Batista J.S."/>
            <person name="Belo A."/>
            <person name="van den Berg C."/>
            <person name="Bogo M."/>
            <person name="Bonatto S."/>
            <person name="Bordignon J."/>
            <person name="Brigido M.M."/>
            <person name="Brito C.A."/>
            <person name="Brocchi M."/>
            <person name="Burity H.A."/>
            <person name="Camargo A.A."/>
            <person name="Cardoso D.D.P."/>
            <person name="Carneiro N.P."/>
            <person name="Carraro D.M."/>
            <person name="Carvalho C.M.B."/>
            <person name="Cascardo J.C.M."/>
            <person name="Cavada B.S."/>
            <person name="Chueire L.M.O."/>
            <person name="Creczynski-Pasa T.B."/>
            <person name="Cunha-Junior N.C."/>
            <person name="Fagundes N."/>
            <person name="Falcao C.L."/>
            <person name="Fantinatti F."/>
            <person name="Farias I.P."/>
            <person name="Felipe M.S.S."/>
            <person name="Ferrari L.P."/>
            <person name="Ferro J.A."/>
            <person name="Ferro M.I.T."/>
            <person name="Franco G.R."/>
            <person name="Freitas N.S.A."/>
            <person name="Furlan L.R."/>
            <person name="Gazzinelli R.T."/>
            <person name="Gomes E.A."/>
            <person name="Goncalves P.R."/>
            <person name="Grangeiro T.B."/>
            <person name="Grattapaglia D."/>
            <person name="Grisard E.C."/>
            <person name="Hanna E.S."/>
            <person name="Jardim S.N."/>
            <person name="Laurino J."/>
            <person name="Leoi L.C.T."/>
            <person name="Lima L.F.A."/>
            <person name="Loureiro M.F."/>
            <person name="Lyra M.C.C.P."/>
            <person name="Madeira H.M.F."/>
            <person name="Manfio G.P."/>
            <person name="Maranhao A.Q."/>
            <person name="Martins W.S."/>
            <person name="di Mauro S.M.Z."/>
            <person name="de Medeiros S.R.B."/>
            <person name="Meissner R.V."/>
            <person name="Moreira M.A.M."/>
            <person name="Nascimento F.F."/>
            <person name="Nicolas M.F."/>
            <person name="Oliveira J.G."/>
            <person name="Oliveira S.C."/>
            <person name="Paixao R.F.C."/>
            <person name="Parente J.A."/>
            <person name="Pedrosa F.O."/>
            <person name="Pena S.D.J."/>
            <person name="Pereira J.O."/>
            <person name="Pereira M."/>
            <person name="Pinto L.S.R.C."/>
            <person name="Pinto L.S."/>
            <person name="Porto J.I.R."/>
            <person name="Potrich D.P."/>
            <person name="Ramalho-Neto C.E."/>
            <person name="Reis A.M.M."/>
            <person name="Rigo L.U."/>
            <person name="Rondinelli E."/>
            <person name="Santos E.B.P."/>
            <person name="Santos F.R."/>
            <person name="Schneider M.P.C."/>
            <person name="Seuanez H.N."/>
            <person name="Silva A.M.R."/>
            <person name="da Silva A.L.C."/>
            <person name="Silva D.W."/>
            <person name="Silva R."/>
            <person name="Simoes I.C."/>
            <person name="Simon D."/>
            <person name="Soares C.M.A."/>
            <person name="Soares R.B.A."/>
            <person name="Souza E.M."/>
            <person name="Souza K.R.L."/>
            <person name="Souza R.C."/>
            <person name="Steffens M.B.R."/>
            <person name="Steindel M."/>
            <person name="Teixeira S.R."/>
            <person name="Urmenyi T."/>
            <person name="Vettore A."/>
            <person name="Wassem R."/>
            <person name="Zaha A."/>
            <person name="Simpson A.J.G."/>
        </authorList>
    </citation>
    <scope>NUCLEOTIDE SEQUENCE [LARGE SCALE GENOMIC DNA]</scope>
    <source>
        <strain>ATCC 12472 / DSM 30191 / JCM 1249 / CCUG 213 / NBRC 12614 / NCIMB 9131 / NCTC 9757 / MK</strain>
    </source>
</reference>
<gene>
    <name evidence="1" type="primary">nadD</name>
    <name type="ordered locus">CV_0519</name>
</gene>
<feature type="chain" id="PRO_1000078372" description="Probable nicotinate-nucleotide adenylyltransferase">
    <location>
        <begin position="1"/>
        <end position="212"/>
    </location>
</feature>
<dbReference type="EC" id="2.7.7.18" evidence="1"/>
<dbReference type="EMBL" id="AE016825">
    <property type="protein sequence ID" value="AAQ58196.1"/>
    <property type="molecule type" value="Genomic_DNA"/>
</dbReference>
<dbReference type="RefSeq" id="WP_011134074.1">
    <property type="nucleotide sequence ID" value="NC_005085.1"/>
</dbReference>
<dbReference type="SMR" id="Q7P0P7"/>
<dbReference type="STRING" id="243365.CV_0519"/>
<dbReference type="GeneID" id="66365571"/>
<dbReference type="KEGG" id="cvi:CV_0519"/>
<dbReference type="eggNOG" id="COG1057">
    <property type="taxonomic scope" value="Bacteria"/>
</dbReference>
<dbReference type="HOGENOM" id="CLU_069765_0_0_4"/>
<dbReference type="OrthoDB" id="5295945at2"/>
<dbReference type="UniPathway" id="UPA00253">
    <property type="reaction ID" value="UER00332"/>
</dbReference>
<dbReference type="Proteomes" id="UP000001424">
    <property type="component" value="Chromosome"/>
</dbReference>
<dbReference type="GO" id="GO:0005524">
    <property type="term" value="F:ATP binding"/>
    <property type="evidence" value="ECO:0007669"/>
    <property type="project" value="UniProtKB-KW"/>
</dbReference>
<dbReference type="GO" id="GO:0004515">
    <property type="term" value="F:nicotinate-nucleotide adenylyltransferase activity"/>
    <property type="evidence" value="ECO:0007669"/>
    <property type="project" value="UniProtKB-UniRule"/>
</dbReference>
<dbReference type="GO" id="GO:0009435">
    <property type="term" value="P:NAD biosynthetic process"/>
    <property type="evidence" value="ECO:0007669"/>
    <property type="project" value="UniProtKB-UniRule"/>
</dbReference>
<dbReference type="CDD" id="cd02165">
    <property type="entry name" value="NMNAT"/>
    <property type="match status" value="1"/>
</dbReference>
<dbReference type="Gene3D" id="3.40.50.620">
    <property type="entry name" value="HUPs"/>
    <property type="match status" value="1"/>
</dbReference>
<dbReference type="HAMAP" id="MF_00244">
    <property type="entry name" value="NaMN_adenylyltr"/>
    <property type="match status" value="1"/>
</dbReference>
<dbReference type="InterPro" id="IPR004821">
    <property type="entry name" value="Cyt_trans-like"/>
</dbReference>
<dbReference type="InterPro" id="IPR005248">
    <property type="entry name" value="NadD/NMNAT"/>
</dbReference>
<dbReference type="InterPro" id="IPR014729">
    <property type="entry name" value="Rossmann-like_a/b/a_fold"/>
</dbReference>
<dbReference type="NCBIfam" id="TIGR00125">
    <property type="entry name" value="cyt_tran_rel"/>
    <property type="match status" value="1"/>
</dbReference>
<dbReference type="NCBIfam" id="TIGR00482">
    <property type="entry name" value="nicotinate (nicotinamide) nucleotide adenylyltransferase"/>
    <property type="match status" value="1"/>
</dbReference>
<dbReference type="NCBIfam" id="NF000839">
    <property type="entry name" value="PRK00071.1-1"/>
    <property type="match status" value="1"/>
</dbReference>
<dbReference type="NCBIfam" id="NF000840">
    <property type="entry name" value="PRK00071.1-3"/>
    <property type="match status" value="1"/>
</dbReference>
<dbReference type="PANTHER" id="PTHR39321">
    <property type="entry name" value="NICOTINATE-NUCLEOTIDE ADENYLYLTRANSFERASE-RELATED"/>
    <property type="match status" value="1"/>
</dbReference>
<dbReference type="PANTHER" id="PTHR39321:SF3">
    <property type="entry name" value="PHOSPHOPANTETHEINE ADENYLYLTRANSFERASE"/>
    <property type="match status" value="1"/>
</dbReference>
<dbReference type="Pfam" id="PF01467">
    <property type="entry name" value="CTP_transf_like"/>
    <property type="match status" value="1"/>
</dbReference>
<dbReference type="SUPFAM" id="SSF52374">
    <property type="entry name" value="Nucleotidylyl transferase"/>
    <property type="match status" value="1"/>
</dbReference>
<proteinExistence type="inferred from homology"/>
<accession>Q7P0P7</accession>